<proteinExistence type="evidence at protein level"/>
<sequence>MVFVECGAALKLNQCIYIGIASTICLLITQKANAQEKPVNTKNIGLITNIPRLSDIERPPTSVKDWLSQSAPTPPKIKITGVRINRTDDNFEIILETPDGEISAPETLQEGNIFIADIPNAVLALPEGKEFREDTPVDGISYVTVTQQESNNTVRVTIASSGKLPPIQVVNQSNGLTIALTPTSPDIELIVTAQKRPEDAQDVPLSLTVIPQQEIEDAQIRSFQDIANNTPNFSFLPTTAGSADFSYYSVRGLNNFNFLANQDTVGFYIDDVPFDYGGFLDVGLIDLERVEVLRGPQSTLYGRSSPAGVVNVISRPPSNQPEMRISALYGSYNNRELQLSLSDAIIPDKLAFRLAGAYNARDGVFDNTFLNKPIGERSQLTGRAQILWTPTPEWNISFNAYASDNDNGNPTFSRQNAENPFQVSQEVDGFHRLSTNTQALKISYNGDGFRATSITTRRFSNQNTLVGDNFPGDLLQQIIGINSTLWSQEFRLQSPESADRLRWLLGGYYESRNFNVLDDTFKYSDAGAVFFGLPASGSDRVSAEQNRHTYAIFGQIDYKPIAPLTLFAGWRYETADAELDRRRVFVNPDGTANPPTAEVRNATLNSDAFIPRFGLQYRFNPNLMAYATIAKGYRPSGFNYRADTEDTRRFQEETTWTYEAGLKSSWLDDRLSANLSIFQSDVDNYQVLLTDDFGFFRNVTNANVKVTGLEFELKANPLQGLDLIAGIGYVDSKFKNYRNSFTNRDFSNNRVPFAPELTYNLAVQYRSPGGIFARAELRGYGITYFDDANQVKQDPYALVNARIGYEGEKYGIYLYANNLFDTRYITSGFLFPPPNVTAGFGDPVTYGVRVSASF</sequence>
<reference evidence="7 8" key="1">
    <citation type="journal article" date="2001" name="DNA Res.">
        <title>Complete genomic sequence of the filamentous nitrogen-fixing cyanobacterium Anabaena sp. strain PCC 7120.</title>
        <authorList>
            <person name="Kaneko T."/>
            <person name="Nakamura Y."/>
            <person name="Wolk C.P."/>
            <person name="Kuritz T."/>
            <person name="Sasamoto S."/>
            <person name="Watanabe A."/>
            <person name="Iriguchi M."/>
            <person name="Ishikawa A."/>
            <person name="Kawashima K."/>
            <person name="Kimura T."/>
            <person name="Kishida Y."/>
            <person name="Kohara M."/>
            <person name="Matsumoto M."/>
            <person name="Matsuno A."/>
            <person name="Muraki A."/>
            <person name="Nakazaki N."/>
            <person name="Shimpo S."/>
            <person name="Sugimoto M."/>
            <person name="Takazawa M."/>
            <person name="Yamada M."/>
            <person name="Yasuda M."/>
            <person name="Tabata S."/>
        </authorList>
    </citation>
    <scope>NUCLEOTIDE SEQUENCE [LARGE SCALE GENOMIC DNA]</scope>
    <source>
        <strain evidence="8">PCC 7120 / SAG 25.82 / UTEX 2576</strain>
    </source>
</reference>
<reference key="2">
    <citation type="journal article" date="2005" name="J. Proteome Res.">
        <title>Proteomic analysis of the outer membrane of Anabaena sp. strain PCC 7120.</title>
        <authorList>
            <person name="Moslavac S."/>
            <person name="Bredemeier R."/>
            <person name="Mirus O."/>
            <person name="Granvogl B."/>
            <person name="Eichacker L.A."/>
            <person name="Schleiff E."/>
        </authorList>
    </citation>
    <scope>IDENTIFICATION BY MASS SPECTROMETRY</scope>
    <scope>SUBCELLULAR LOCATION</scope>
</reference>
<reference key="3">
    <citation type="journal article" date="2007" name="Biol. Chem.">
        <title>The proteome of the heterocyst cell wall in Anabaena sp. PCC 7120.</title>
        <authorList>
            <person name="Moslavac S."/>
            <person name="Reisinger V."/>
            <person name="Berg M."/>
            <person name="Mirus O."/>
            <person name="Vosyka O."/>
            <person name="Ploescher M."/>
            <person name="Flores E."/>
            <person name="Eichacker L.A."/>
            <person name="Schleiff E."/>
        </authorList>
    </citation>
    <scope>INDUCTION</scope>
</reference>
<reference key="4">
    <citation type="journal article" date="2010" name="Biochim. Biophys. Acta">
        <title>The interplay between siderophore secretion and coupled iron and copper transport in the heterocyst-forming cyanobacterium Anabaena sp. PCC 7120.</title>
        <authorList>
            <person name="Nicolaisen K."/>
            <person name="Hahn A."/>
            <person name="Valdebenito M."/>
            <person name="Moslavac S."/>
            <person name="Samborski A."/>
            <person name="Maldener I."/>
            <person name="Wilken C."/>
            <person name="Valladares A."/>
            <person name="Flores E."/>
            <person name="Hantke K."/>
            <person name="Schleiff E."/>
        </authorList>
    </citation>
    <scope>FUNCTION</scope>
    <scope>INDUCTION</scope>
    <scope>DISRUPTION PHENOTYPE</scope>
</reference>
<accession>Q8YQ14</accession>
<evidence type="ECO:0000250" key="1">
    <source>
        <dbReference type="UniProtKB" id="P46359"/>
    </source>
</evidence>
<evidence type="ECO:0000255" key="2">
    <source>
        <dbReference type="PROSITE-ProRule" id="PRU01360"/>
    </source>
</evidence>
<evidence type="ECO:0000269" key="3">
    <source>
    </source>
</evidence>
<evidence type="ECO:0000269" key="4">
    <source>
    </source>
</evidence>
<evidence type="ECO:0000269" key="5">
    <source>
    </source>
</evidence>
<evidence type="ECO:0000303" key="6">
    <source>
    </source>
</evidence>
<evidence type="ECO:0000312" key="7">
    <source>
        <dbReference type="EMBL" id="BAB75725.1"/>
    </source>
</evidence>
<evidence type="ECO:0000312" key="8">
    <source>
        <dbReference type="Proteomes" id="UP000002483"/>
    </source>
</evidence>
<protein>
    <recommendedName>
        <fullName evidence="6">Iron and copper transporter IacT</fullName>
    </recommendedName>
    <alternativeName>
        <fullName evidence="6">TonB-dependent transporter IacT</fullName>
        <shortName evidence="6">TBDT IacT</shortName>
    </alternativeName>
</protein>
<feature type="chain" id="PRO_0000458439" description="Iron and copper transporter IacT">
    <location>
        <begin position="1"/>
        <end position="854"/>
    </location>
</feature>
<feature type="domain" description="TBDR plug" evidence="2">
    <location>
        <begin position="199"/>
        <end position="315"/>
    </location>
</feature>
<feature type="domain" description="TBDR beta-barrel" evidence="2">
    <location>
        <begin position="320"/>
        <end position="854"/>
    </location>
</feature>
<feature type="short sequence motif" description="TonB box" evidence="1">
    <location>
        <begin position="187"/>
        <end position="194"/>
    </location>
</feature>
<feature type="short sequence motif" description="TonB C-terminal box" evidence="1">
    <location>
        <begin position="839"/>
        <end position="854"/>
    </location>
</feature>
<gene>
    <name evidence="6" type="primary">iacT</name>
    <name evidence="7" type="ordered locus">all4026</name>
</gene>
<comment type="function">
    <text evidence="5">Involved in the TonB-dependent uptake of copper and iron under conditions in which the concentration of copper exceeds that of the iron.</text>
</comment>
<comment type="subcellular location">
    <subcellularLocation>
        <location evidence="2 3">Cell outer membrane</location>
        <topology evidence="2">Multi-pass membrane protein</topology>
    </subcellularLocation>
</comment>
<comment type="induction">
    <text evidence="4 5">Expression is significantly up-regulated by nitrogen starvation after 24 hours (PubMed:17655501). Constitutively expressed. Expression is very slightly increased by transferring cells into a medium lacking iron or copper (PubMed:20647000).</text>
</comment>
<comment type="disruption phenotype">
    <text evidence="5">Viable. Less sensitive to high iron and copper levels than wild-type. Secretes schizokinen even in the presence of iron when grown in BG11 medium or in BG11 without iron and copper as opposed to no secretion of schizokinen in wild-type under these conditions. Secretes schizokinen under iron-limiting conditions similarly to the wild-type. No effect on schizokinen-complexed iron uptake. Contrary to the wild-type, iron uptake is increased when grown in BG11 without iron and copper as well as in BG11 without iron, but addition of copper decreases iron uptake. Decreased copper content compared to wild-type when grown in BG11 medium without iron. Iron uptake is stimulated by copper similarly to the wild-type, but the rate of uptake of both metals is decreased compared to wild-type. Increased survival on high iron concentrations supplied as ferric ammonium citrate (FeACi) compared to wild-type.</text>
</comment>
<comment type="similarity">
    <text evidence="2">Belongs to the TonB-dependent receptor family.</text>
</comment>
<dbReference type="EMBL" id="BA000019">
    <property type="protein sequence ID" value="BAB75725.1"/>
    <property type="molecule type" value="Genomic_DNA"/>
</dbReference>
<dbReference type="PIR" id="AC2309">
    <property type="entry name" value="AC2309"/>
</dbReference>
<dbReference type="SMR" id="Q8YQ14"/>
<dbReference type="STRING" id="103690.gene:10496069"/>
<dbReference type="KEGG" id="ana:all4026"/>
<dbReference type="eggNOG" id="COG4773">
    <property type="taxonomic scope" value="Bacteria"/>
</dbReference>
<dbReference type="Proteomes" id="UP000002483">
    <property type="component" value="Chromosome"/>
</dbReference>
<dbReference type="GO" id="GO:0009279">
    <property type="term" value="C:cell outer membrane"/>
    <property type="evidence" value="ECO:0000314"/>
    <property type="project" value="UniProtKB"/>
</dbReference>
<dbReference type="GO" id="GO:0005375">
    <property type="term" value="F:copper ion transmembrane transporter activity"/>
    <property type="evidence" value="ECO:0000315"/>
    <property type="project" value="UniProtKB"/>
</dbReference>
<dbReference type="GO" id="GO:0005381">
    <property type="term" value="F:iron ion transmembrane transporter activity"/>
    <property type="evidence" value="ECO:0000315"/>
    <property type="project" value="UniProtKB"/>
</dbReference>
<dbReference type="GO" id="GO:0071280">
    <property type="term" value="P:cellular response to copper ion"/>
    <property type="evidence" value="ECO:0000315"/>
    <property type="project" value="UniProtKB"/>
</dbReference>
<dbReference type="GO" id="GO:0006995">
    <property type="term" value="P:cellular response to nitrogen starvation"/>
    <property type="evidence" value="ECO:0000270"/>
    <property type="project" value="UniProtKB"/>
</dbReference>
<dbReference type="GO" id="GO:0035434">
    <property type="term" value="P:copper ion transmembrane transport"/>
    <property type="evidence" value="ECO:0000315"/>
    <property type="project" value="UniProtKB"/>
</dbReference>
<dbReference type="GO" id="GO:0034755">
    <property type="term" value="P:iron ion transmembrane transport"/>
    <property type="evidence" value="ECO:0000315"/>
    <property type="project" value="UniProtKB"/>
</dbReference>
<dbReference type="CDD" id="cd01347">
    <property type="entry name" value="ligand_gated_channel"/>
    <property type="match status" value="1"/>
</dbReference>
<dbReference type="Gene3D" id="2.40.170.20">
    <property type="entry name" value="TonB-dependent receptor, beta-barrel domain"/>
    <property type="match status" value="1"/>
</dbReference>
<dbReference type="InterPro" id="IPR021731">
    <property type="entry name" value="AMIN_dom"/>
</dbReference>
<dbReference type="InterPro" id="IPR012910">
    <property type="entry name" value="Plug_dom"/>
</dbReference>
<dbReference type="InterPro" id="IPR039426">
    <property type="entry name" value="TonB-dep_rcpt-like"/>
</dbReference>
<dbReference type="InterPro" id="IPR000531">
    <property type="entry name" value="TonB-dep_rcpt_b-brl"/>
</dbReference>
<dbReference type="InterPro" id="IPR036942">
    <property type="entry name" value="TonB_rcpt_b-brl_sf"/>
</dbReference>
<dbReference type="PANTHER" id="PTHR32552">
    <property type="entry name" value="FERRICHROME IRON RECEPTOR-RELATED"/>
    <property type="match status" value="1"/>
</dbReference>
<dbReference type="PANTHER" id="PTHR32552:SF81">
    <property type="entry name" value="TONB-DEPENDENT OUTER MEMBRANE RECEPTOR"/>
    <property type="match status" value="1"/>
</dbReference>
<dbReference type="Pfam" id="PF11741">
    <property type="entry name" value="AMIN"/>
    <property type="match status" value="1"/>
</dbReference>
<dbReference type="Pfam" id="PF07715">
    <property type="entry name" value="Plug"/>
    <property type="match status" value="1"/>
</dbReference>
<dbReference type="Pfam" id="PF00593">
    <property type="entry name" value="TonB_dep_Rec_b-barrel"/>
    <property type="match status" value="1"/>
</dbReference>
<dbReference type="SUPFAM" id="SSF56935">
    <property type="entry name" value="Porins"/>
    <property type="match status" value="1"/>
</dbReference>
<dbReference type="PROSITE" id="PS52016">
    <property type="entry name" value="TONB_DEPENDENT_REC_3"/>
    <property type="match status" value="1"/>
</dbReference>
<name>IACT_NOSS1</name>
<keyword id="KW-0998">Cell outer membrane</keyword>
<keyword id="KW-0186">Copper</keyword>
<keyword id="KW-0187">Copper transport</keyword>
<keyword id="KW-0406">Ion transport</keyword>
<keyword id="KW-0408">Iron</keyword>
<keyword id="KW-0410">Iron transport</keyword>
<keyword id="KW-0472">Membrane</keyword>
<keyword id="KW-1185">Reference proteome</keyword>
<keyword id="KW-0798">TonB box</keyword>
<keyword id="KW-0812">Transmembrane</keyword>
<keyword id="KW-1134">Transmembrane beta strand</keyword>
<keyword id="KW-0813">Transport</keyword>
<organism evidence="7 8">
    <name type="scientific">Nostoc sp. (strain PCC 7120 / SAG 25.82 / UTEX 2576)</name>
    <dbReference type="NCBI Taxonomy" id="103690"/>
    <lineage>
        <taxon>Bacteria</taxon>
        <taxon>Bacillati</taxon>
        <taxon>Cyanobacteriota</taxon>
        <taxon>Cyanophyceae</taxon>
        <taxon>Nostocales</taxon>
        <taxon>Nostocaceae</taxon>
        <taxon>Nostoc</taxon>
    </lineage>
</organism>